<keyword id="KW-0056">Arginine metabolism</keyword>
<keyword id="KW-0067">ATP-binding</keyword>
<keyword id="KW-0963">Cytoplasm</keyword>
<keyword id="KW-0418">Kinase</keyword>
<keyword id="KW-0547">Nucleotide-binding</keyword>
<keyword id="KW-0808">Transferase</keyword>
<proteinExistence type="inferred from homology"/>
<protein>
    <recommendedName>
        <fullName>Carbamate kinase</fullName>
        <ecNumber>2.7.2.2</ecNumber>
    </recommendedName>
</protein>
<accession>Q8VW54</accession>
<sequence length="313" mass="33964">MANRKIVVALGGNAILSKDASAEAQQAALRETAKSLVSLVKENEKLIITHGNGPQVGNLLLQQMIGSTKSNPAMPIDTAVSMTEGSIGYWMQNAMDDVLEDEGIDKSAATVVTQVEVDANDSAFQNPSKPIGPFYEKEDINKIRELHPEYIYVEDAGRGYRRVVPSPKPVNVREYQVINSLVDNNVIPISVGGGGVPVVREGNHLIGCEAVIDKDFASEKLAELIKADLLIILTAVDNVYINFNKPDQKKLENVTVEELENYINENQFAKGSMLPKVQAAINFVNNGCGEAVVTSLKNINNFLQKGSGTIITK</sequence>
<comment type="catalytic activity">
    <reaction>
        <text>hydrogencarbonate + NH4(+) + ATP = carbamoyl phosphate + ADP + H2O + H(+)</text>
        <dbReference type="Rhea" id="RHEA:10152"/>
        <dbReference type="ChEBI" id="CHEBI:15377"/>
        <dbReference type="ChEBI" id="CHEBI:15378"/>
        <dbReference type="ChEBI" id="CHEBI:17544"/>
        <dbReference type="ChEBI" id="CHEBI:28938"/>
        <dbReference type="ChEBI" id="CHEBI:30616"/>
        <dbReference type="ChEBI" id="CHEBI:58228"/>
        <dbReference type="ChEBI" id="CHEBI:456216"/>
        <dbReference type="EC" id="2.7.2.2"/>
    </reaction>
</comment>
<comment type="pathway">
    <text>Metabolic intermediate metabolism; carbamoyl phosphate degradation; CO(2) and NH(3) from carbamoyl phosphate: step 1/1.</text>
</comment>
<comment type="subcellular location">
    <subcellularLocation>
        <location evidence="1">Cytoplasm</location>
    </subcellularLocation>
</comment>
<comment type="similarity">
    <text evidence="1">Belongs to the carbamate kinase family.</text>
</comment>
<evidence type="ECO:0000305" key="1"/>
<feature type="chain" id="PRO_0000185128" description="Carbamate kinase">
    <location>
        <begin position="1"/>
        <end position="313"/>
    </location>
</feature>
<name>ARCC_OENOE</name>
<organism>
    <name type="scientific">Oenococcus oeni</name>
    <name type="common">Leuconostoc oenos</name>
    <dbReference type="NCBI Taxonomy" id="1247"/>
    <lineage>
        <taxon>Bacteria</taxon>
        <taxon>Bacillati</taxon>
        <taxon>Bacillota</taxon>
        <taxon>Bacilli</taxon>
        <taxon>Lactobacillales</taxon>
        <taxon>Lactobacillaceae</taxon>
        <taxon>Oenococcus</taxon>
    </lineage>
</organism>
<dbReference type="EC" id="2.7.2.2"/>
<dbReference type="EMBL" id="AF124851">
    <property type="protein sequence ID" value="AAL33872.1"/>
    <property type="molecule type" value="Genomic_DNA"/>
</dbReference>
<dbReference type="RefSeq" id="WP_002820807.1">
    <property type="nucleotide sequence ID" value="NZ_WERV01000001.1"/>
</dbReference>
<dbReference type="SMR" id="Q8VW54"/>
<dbReference type="GeneID" id="75066326"/>
<dbReference type="PATRIC" id="fig|1247.145.peg.482"/>
<dbReference type="UniPathway" id="UPA00996">
    <property type="reaction ID" value="UER00366"/>
</dbReference>
<dbReference type="GO" id="GO:0005829">
    <property type="term" value="C:cytosol"/>
    <property type="evidence" value="ECO:0007669"/>
    <property type="project" value="TreeGrafter"/>
</dbReference>
<dbReference type="GO" id="GO:0005524">
    <property type="term" value="F:ATP binding"/>
    <property type="evidence" value="ECO:0007669"/>
    <property type="project" value="UniProtKB-KW"/>
</dbReference>
<dbReference type="GO" id="GO:0008804">
    <property type="term" value="F:carbamate kinase activity"/>
    <property type="evidence" value="ECO:0007669"/>
    <property type="project" value="UniProtKB-EC"/>
</dbReference>
<dbReference type="GO" id="GO:0019546">
    <property type="term" value="P:arginine deiminase pathway"/>
    <property type="evidence" value="ECO:0007669"/>
    <property type="project" value="TreeGrafter"/>
</dbReference>
<dbReference type="CDD" id="cd04235">
    <property type="entry name" value="AAK_CK"/>
    <property type="match status" value="1"/>
</dbReference>
<dbReference type="FunFam" id="3.40.1160.10:FF:000007">
    <property type="entry name" value="Carbamate kinase"/>
    <property type="match status" value="1"/>
</dbReference>
<dbReference type="Gene3D" id="3.40.1160.10">
    <property type="entry name" value="Acetylglutamate kinase-like"/>
    <property type="match status" value="1"/>
</dbReference>
<dbReference type="InterPro" id="IPR036393">
    <property type="entry name" value="AceGlu_kinase-like_sf"/>
</dbReference>
<dbReference type="InterPro" id="IPR001048">
    <property type="entry name" value="Asp/Glu/Uridylate_kinase"/>
</dbReference>
<dbReference type="InterPro" id="IPR003964">
    <property type="entry name" value="Carb_kinase"/>
</dbReference>
<dbReference type="NCBIfam" id="TIGR00746">
    <property type="entry name" value="arcC"/>
    <property type="match status" value="1"/>
</dbReference>
<dbReference type="NCBIfam" id="NF009007">
    <property type="entry name" value="PRK12352.1"/>
    <property type="match status" value="1"/>
</dbReference>
<dbReference type="PANTHER" id="PTHR30409">
    <property type="entry name" value="CARBAMATE KINASE"/>
    <property type="match status" value="1"/>
</dbReference>
<dbReference type="PANTHER" id="PTHR30409:SF1">
    <property type="entry name" value="CARBAMATE KINASE-RELATED"/>
    <property type="match status" value="1"/>
</dbReference>
<dbReference type="Pfam" id="PF00696">
    <property type="entry name" value="AA_kinase"/>
    <property type="match status" value="1"/>
</dbReference>
<dbReference type="PIRSF" id="PIRSF000723">
    <property type="entry name" value="Carbamate_kin"/>
    <property type="match status" value="1"/>
</dbReference>
<dbReference type="PRINTS" id="PR01469">
    <property type="entry name" value="CARBMTKINASE"/>
</dbReference>
<dbReference type="SUPFAM" id="SSF53633">
    <property type="entry name" value="Carbamate kinase-like"/>
    <property type="match status" value="1"/>
</dbReference>
<reference key="1">
    <citation type="submission" date="1999-01" db="EMBL/GenBank/DDBJ databases">
        <title>Oenococcus oeni arcA, arcB and arcC genes.</title>
        <authorList>
            <person name="Tonon T."/>
            <person name="Lonvaud-Funel A."/>
        </authorList>
    </citation>
    <scope>NUCLEOTIDE SEQUENCE [GENOMIC DNA]</scope>
    <source>
        <strain>ATCC 23279 / DSM 20252 / BCRC 14062 / CIP 106144 / JCM 6125 / NBRC 100497 / NCDO 1674 / NCIMB 11648 / NRRL B-3472</strain>
    </source>
</reference>
<gene>
    <name type="primary">arcC</name>
</gene>